<dbReference type="EC" id="2.5.1.75"/>
<dbReference type="EMBL" id="CP001173">
    <property type="protein sequence ID" value="ACI28086.1"/>
    <property type="molecule type" value="Genomic_DNA"/>
</dbReference>
<dbReference type="SMR" id="B5Z937"/>
<dbReference type="KEGG" id="hpg:HPG27_1338"/>
<dbReference type="HOGENOM" id="CLU_032616_0_1_7"/>
<dbReference type="Proteomes" id="UP000001735">
    <property type="component" value="Chromosome"/>
</dbReference>
<dbReference type="GO" id="GO:0005524">
    <property type="term" value="F:ATP binding"/>
    <property type="evidence" value="ECO:0007669"/>
    <property type="project" value="UniProtKB-KW"/>
</dbReference>
<dbReference type="GO" id="GO:0052381">
    <property type="term" value="F:tRNA dimethylallyltransferase activity"/>
    <property type="evidence" value="ECO:0007669"/>
    <property type="project" value="UniProtKB-EC"/>
</dbReference>
<dbReference type="GO" id="GO:0006400">
    <property type="term" value="P:tRNA modification"/>
    <property type="evidence" value="ECO:0007669"/>
    <property type="project" value="TreeGrafter"/>
</dbReference>
<dbReference type="Gene3D" id="1.10.20.140">
    <property type="match status" value="1"/>
</dbReference>
<dbReference type="Gene3D" id="3.40.50.300">
    <property type="entry name" value="P-loop containing nucleotide triphosphate hydrolases"/>
    <property type="match status" value="1"/>
</dbReference>
<dbReference type="InterPro" id="IPR039657">
    <property type="entry name" value="Dimethylallyltransferase"/>
</dbReference>
<dbReference type="InterPro" id="IPR018022">
    <property type="entry name" value="IPT"/>
</dbReference>
<dbReference type="InterPro" id="IPR027417">
    <property type="entry name" value="P-loop_NTPase"/>
</dbReference>
<dbReference type="NCBIfam" id="TIGR00174">
    <property type="entry name" value="miaA"/>
    <property type="match status" value="1"/>
</dbReference>
<dbReference type="PANTHER" id="PTHR11088">
    <property type="entry name" value="TRNA DIMETHYLALLYLTRANSFERASE"/>
    <property type="match status" value="1"/>
</dbReference>
<dbReference type="PANTHER" id="PTHR11088:SF60">
    <property type="entry name" value="TRNA DIMETHYLALLYLTRANSFERASE"/>
    <property type="match status" value="1"/>
</dbReference>
<dbReference type="Pfam" id="PF01715">
    <property type="entry name" value="IPPT"/>
    <property type="match status" value="1"/>
</dbReference>
<name>MIAA_HELPG</name>
<protein>
    <recommendedName>
        <fullName>tRNA dimethylallyltransferase</fullName>
        <ecNumber>2.5.1.75</ecNumber>
    </recommendedName>
    <alternativeName>
        <fullName>Dimethylallyl diphosphate:tRNA dimethylallyltransferase</fullName>
        <shortName>DMAPP:tRNA dimethylallyltransferase</shortName>
        <shortName>DMATase</shortName>
    </alternativeName>
    <alternativeName>
        <fullName>Isopentenyl-diphosphate:tRNA isopentenyltransferase</fullName>
        <shortName>IPP transferase</shortName>
        <shortName>IPPT</shortName>
        <shortName>IPTase</shortName>
    </alternativeName>
</protein>
<comment type="function">
    <text evidence="1">Catalyzes the transfer of a dimethylallyl group onto the adenine at position 37 in tRNAs that read codons beginning with uridine, leading to the formation of N6-(dimethylallyl)adenosine (i(6)A).</text>
</comment>
<comment type="catalytic activity">
    <reaction>
        <text>adenosine(37) in tRNA + dimethylallyl diphosphate = N(6)-dimethylallyladenosine(37) in tRNA + diphosphate</text>
        <dbReference type="Rhea" id="RHEA:26482"/>
        <dbReference type="Rhea" id="RHEA-COMP:10162"/>
        <dbReference type="Rhea" id="RHEA-COMP:10375"/>
        <dbReference type="ChEBI" id="CHEBI:33019"/>
        <dbReference type="ChEBI" id="CHEBI:57623"/>
        <dbReference type="ChEBI" id="CHEBI:74411"/>
        <dbReference type="ChEBI" id="CHEBI:74415"/>
        <dbReference type="EC" id="2.5.1.75"/>
    </reaction>
</comment>
<comment type="cofactor">
    <cofactor evidence="1">
        <name>Mg(2+)</name>
        <dbReference type="ChEBI" id="CHEBI:18420"/>
    </cofactor>
</comment>
<comment type="subunit">
    <text evidence="1">Monomer.</text>
</comment>
<comment type="similarity">
    <text evidence="2">Belongs to the IPP transferase family.</text>
</comment>
<proteinExistence type="inferred from homology"/>
<gene>
    <name type="primary">miaA</name>
    <name type="ordered locus">HPG27_1338</name>
</gene>
<reference key="1">
    <citation type="journal article" date="2009" name="J. Bacteriol.">
        <title>The complete genome sequence of Helicobacter pylori strain G27.</title>
        <authorList>
            <person name="Baltrus D.A."/>
            <person name="Amieva M.R."/>
            <person name="Covacci A."/>
            <person name="Lowe T.M."/>
            <person name="Merrell D.S."/>
            <person name="Ottemann K.M."/>
            <person name="Stein M."/>
            <person name="Salama N.R."/>
            <person name="Guillemin K."/>
        </authorList>
    </citation>
    <scope>NUCLEOTIDE SEQUENCE [LARGE SCALE GENOMIC DNA]</scope>
    <source>
        <strain>G27</strain>
    </source>
</reference>
<evidence type="ECO:0000250" key="1"/>
<evidence type="ECO:0000305" key="2"/>
<sequence length="276" mass="31421">MDAEIFSLDSLSIYKDINIASAKPSLKERKNIKHYALDYLNIDEKNNAQLFKTLLEDAMRVSSKEILLIVGGSSFYLKSILEGLSDTPKISGEEVVKIEREIATLSNPYIFLKSIDPNMAFKIHSNDTYRIHKALEIFYATHTPPSEYFKANPKKPFAHAISLFALSVEKNALHNNIKQRTKNMLHSGLIEEIKALYTQYPKDSQPFKAIGVKESILFLEKRLTLKELEETITSNTIKLAKRQNTFNKTQFNNLYTGSVKEVRHAILKHSKSGIKG</sequence>
<accession>B5Z937</accession>
<feature type="chain" id="PRO_0000377185" description="tRNA dimethylallyltransferase">
    <location>
        <begin position="1"/>
        <end position="276"/>
    </location>
</feature>
<feature type="region of interest" description="Interaction with substrate tRNA" evidence="1">
    <location>
        <begin position="9"/>
        <end position="12"/>
    </location>
</feature>
<feature type="site" description="Interaction with substrate tRNA" evidence="1">
    <location>
        <position position="73"/>
    </location>
</feature>
<organism>
    <name type="scientific">Helicobacter pylori (strain G27)</name>
    <dbReference type="NCBI Taxonomy" id="563041"/>
    <lineage>
        <taxon>Bacteria</taxon>
        <taxon>Pseudomonadati</taxon>
        <taxon>Campylobacterota</taxon>
        <taxon>Epsilonproteobacteria</taxon>
        <taxon>Campylobacterales</taxon>
        <taxon>Helicobacteraceae</taxon>
        <taxon>Helicobacter</taxon>
    </lineage>
</organism>
<keyword id="KW-0067">ATP-binding</keyword>
<keyword id="KW-0460">Magnesium</keyword>
<keyword id="KW-0547">Nucleotide-binding</keyword>
<keyword id="KW-1185">Reference proteome</keyword>
<keyword id="KW-0808">Transferase</keyword>
<keyword id="KW-0819">tRNA processing</keyword>